<proteinExistence type="inferred from homology"/>
<keyword id="KW-0687">Ribonucleoprotein</keyword>
<keyword id="KW-0689">Ribosomal protein</keyword>
<keyword id="KW-0694">RNA-binding</keyword>
<keyword id="KW-0699">rRNA-binding</keyword>
<name>RL24_PSEP1</name>
<protein>
    <recommendedName>
        <fullName evidence="1">Large ribosomal subunit protein uL24</fullName>
    </recommendedName>
    <alternativeName>
        <fullName evidence="2">50S ribosomal protein L24</fullName>
    </alternativeName>
</protein>
<accession>A5VXQ8</accession>
<organism>
    <name type="scientific">Pseudomonas putida (strain ATCC 700007 / DSM 6899 / JCM 31910 / BCRC 17059 / LMG 24140 / F1)</name>
    <dbReference type="NCBI Taxonomy" id="351746"/>
    <lineage>
        <taxon>Bacteria</taxon>
        <taxon>Pseudomonadati</taxon>
        <taxon>Pseudomonadota</taxon>
        <taxon>Gammaproteobacteria</taxon>
        <taxon>Pseudomonadales</taxon>
        <taxon>Pseudomonadaceae</taxon>
        <taxon>Pseudomonas</taxon>
    </lineage>
</organism>
<reference key="1">
    <citation type="submission" date="2007-05" db="EMBL/GenBank/DDBJ databases">
        <title>Complete sequence of Pseudomonas putida F1.</title>
        <authorList>
            <consortium name="US DOE Joint Genome Institute"/>
            <person name="Copeland A."/>
            <person name="Lucas S."/>
            <person name="Lapidus A."/>
            <person name="Barry K."/>
            <person name="Detter J.C."/>
            <person name="Glavina del Rio T."/>
            <person name="Hammon N."/>
            <person name="Israni S."/>
            <person name="Dalin E."/>
            <person name="Tice H."/>
            <person name="Pitluck S."/>
            <person name="Chain P."/>
            <person name="Malfatti S."/>
            <person name="Shin M."/>
            <person name="Vergez L."/>
            <person name="Schmutz J."/>
            <person name="Larimer F."/>
            <person name="Land M."/>
            <person name="Hauser L."/>
            <person name="Kyrpides N."/>
            <person name="Lykidis A."/>
            <person name="Parales R."/>
            <person name="Richardson P."/>
        </authorList>
    </citation>
    <scope>NUCLEOTIDE SEQUENCE [LARGE SCALE GENOMIC DNA]</scope>
    <source>
        <strain>ATCC 700007 / DSM 6899 / JCM 31910 / BCRC 17059 / LMG 24140 / F1</strain>
    </source>
</reference>
<feature type="chain" id="PRO_1000052281" description="Large ribosomal subunit protein uL24">
    <location>
        <begin position="1"/>
        <end position="104"/>
    </location>
</feature>
<gene>
    <name evidence="1" type="primary">rplX</name>
    <name type="ordered locus">Pput_0498</name>
</gene>
<sequence>MQKIRRDDEIIVIAGKDKGKRGKVLKVLADDRLVIGGVNLVKRHTKPNPMAGVQGGIVEKEAPLHASNVAIFNGETNKADRVGFKVEDGKKIRVFKSTQKAVDA</sequence>
<comment type="function">
    <text evidence="1">One of two assembly initiator proteins, it binds directly to the 5'-end of the 23S rRNA, where it nucleates assembly of the 50S subunit.</text>
</comment>
<comment type="function">
    <text evidence="1">One of the proteins that surrounds the polypeptide exit tunnel on the outside of the subunit.</text>
</comment>
<comment type="subunit">
    <text evidence="1">Part of the 50S ribosomal subunit.</text>
</comment>
<comment type="similarity">
    <text evidence="1">Belongs to the universal ribosomal protein uL24 family.</text>
</comment>
<dbReference type="EMBL" id="CP000712">
    <property type="protein sequence ID" value="ABQ76668.1"/>
    <property type="molecule type" value="Genomic_DNA"/>
</dbReference>
<dbReference type="SMR" id="A5VXQ8"/>
<dbReference type="KEGG" id="ppf:Pput_0498"/>
<dbReference type="eggNOG" id="COG0198">
    <property type="taxonomic scope" value="Bacteria"/>
</dbReference>
<dbReference type="HOGENOM" id="CLU_093315_2_2_6"/>
<dbReference type="GO" id="GO:1990904">
    <property type="term" value="C:ribonucleoprotein complex"/>
    <property type="evidence" value="ECO:0007669"/>
    <property type="project" value="UniProtKB-KW"/>
</dbReference>
<dbReference type="GO" id="GO:0005840">
    <property type="term" value="C:ribosome"/>
    <property type="evidence" value="ECO:0007669"/>
    <property type="project" value="UniProtKB-KW"/>
</dbReference>
<dbReference type="GO" id="GO:0019843">
    <property type="term" value="F:rRNA binding"/>
    <property type="evidence" value="ECO:0007669"/>
    <property type="project" value="UniProtKB-UniRule"/>
</dbReference>
<dbReference type="GO" id="GO:0003735">
    <property type="term" value="F:structural constituent of ribosome"/>
    <property type="evidence" value="ECO:0007669"/>
    <property type="project" value="InterPro"/>
</dbReference>
<dbReference type="GO" id="GO:0006412">
    <property type="term" value="P:translation"/>
    <property type="evidence" value="ECO:0007669"/>
    <property type="project" value="UniProtKB-UniRule"/>
</dbReference>
<dbReference type="CDD" id="cd06089">
    <property type="entry name" value="KOW_RPL26"/>
    <property type="match status" value="1"/>
</dbReference>
<dbReference type="FunFam" id="2.30.30.30:FF:000004">
    <property type="entry name" value="50S ribosomal protein L24"/>
    <property type="match status" value="1"/>
</dbReference>
<dbReference type="Gene3D" id="2.30.30.30">
    <property type="match status" value="1"/>
</dbReference>
<dbReference type="HAMAP" id="MF_01326_B">
    <property type="entry name" value="Ribosomal_uL24_B"/>
    <property type="match status" value="1"/>
</dbReference>
<dbReference type="InterPro" id="IPR005824">
    <property type="entry name" value="KOW"/>
</dbReference>
<dbReference type="InterPro" id="IPR014722">
    <property type="entry name" value="Rib_uL2_dom2"/>
</dbReference>
<dbReference type="InterPro" id="IPR003256">
    <property type="entry name" value="Ribosomal_uL24"/>
</dbReference>
<dbReference type="InterPro" id="IPR005825">
    <property type="entry name" value="Ribosomal_uL24_CS"/>
</dbReference>
<dbReference type="InterPro" id="IPR041988">
    <property type="entry name" value="Ribosomal_uL24_KOW"/>
</dbReference>
<dbReference type="InterPro" id="IPR008991">
    <property type="entry name" value="Translation_prot_SH3-like_sf"/>
</dbReference>
<dbReference type="NCBIfam" id="TIGR01079">
    <property type="entry name" value="rplX_bact"/>
    <property type="match status" value="1"/>
</dbReference>
<dbReference type="PANTHER" id="PTHR12903">
    <property type="entry name" value="MITOCHONDRIAL RIBOSOMAL PROTEIN L24"/>
    <property type="match status" value="1"/>
</dbReference>
<dbReference type="Pfam" id="PF00467">
    <property type="entry name" value="KOW"/>
    <property type="match status" value="1"/>
</dbReference>
<dbReference type="Pfam" id="PF17136">
    <property type="entry name" value="ribosomal_L24"/>
    <property type="match status" value="1"/>
</dbReference>
<dbReference type="SMART" id="SM00739">
    <property type="entry name" value="KOW"/>
    <property type="match status" value="1"/>
</dbReference>
<dbReference type="SUPFAM" id="SSF50104">
    <property type="entry name" value="Translation proteins SH3-like domain"/>
    <property type="match status" value="1"/>
</dbReference>
<dbReference type="PROSITE" id="PS01108">
    <property type="entry name" value="RIBOSOMAL_L24"/>
    <property type="match status" value="1"/>
</dbReference>
<evidence type="ECO:0000255" key="1">
    <source>
        <dbReference type="HAMAP-Rule" id="MF_01326"/>
    </source>
</evidence>
<evidence type="ECO:0000305" key="2"/>